<evidence type="ECO:0000255" key="1">
    <source>
        <dbReference type="HAMAP-Rule" id="MF_01020"/>
    </source>
</evidence>
<accession>C1DHS6</accession>
<sequence>MSDTLNQLAEVLEARKNATPDSSYVASLYHKGLNKILEKVGEESVETILAAKDAAASGDCSELIHETADLWFHSLVMLAALGQHPQAVLDELDRRFGLSGHAEKAARQPSA</sequence>
<protein>
    <recommendedName>
        <fullName evidence="1">Phosphoribosyl-ATP pyrophosphatase</fullName>
        <shortName evidence="1">PRA-PH</shortName>
        <ecNumber evidence="1">3.6.1.31</ecNumber>
    </recommendedName>
</protein>
<name>HIS2_AZOVD</name>
<comment type="catalytic activity">
    <reaction evidence="1">
        <text>1-(5-phospho-beta-D-ribosyl)-ATP + H2O = 1-(5-phospho-beta-D-ribosyl)-5'-AMP + diphosphate + H(+)</text>
        <dbReference type="Rhea" id="RHEA:22828"/>
        <dbReference type="ChEBI" id="CHEBI:15377"/>
        <dbReference type="ChEBI" id="CHEBI:15378"/>
        <dbReference type="ChEBI" id="CHEBI:33019"/>
        <dbReference type="ChEBI" id="CHEBI:59457"/>
        <dbReference type="ChEBI" id="CHEBI:73183"/>
        <dbReference type="EC" id="3.6.1.31"/>
    </reaction>
</comment>
<comment type="pathway">
    <text evidence="1">Amino-acid biosynthesis; L-histidine biosynthesis; L-histidine from 5-phospho-alpha-D-ribose 1-diphosphate: step 2/9.</text>
</comment>
<comment type="subcellular location">
    <subcellularLocation>
        <location evidence="1">Cytoplasm</location>
    </subcellularLocation>
</comment>
<comment type="similarity">
    <text evidence="1">Belongs to the PRA-PH family.</text>
</comment>
<reference key="1">
    <citation type="journal article" date="2009" name="J. Bacteriol.">
        <title>Genome sequence of Azotobacter vinelandii, an obligate aerobe specialized to support diverse anaerobic metabolic processes.</title>
        <authorList>
            <person name="Setubal J.C."/>
            <person name="Dos Santos P."/>
            <person name="Goldman B.S."/>
            <person name="Ertesvaag H."/>
            <person name="Espin G."/>
            <person name="Rubio L.M."/>
            <person name="Valla S."/>
            <person name="Almeida N.F."/>
            <person name="Balasubramanian D."/>
            <person name="Cromes L."/>
            <person name="Curatti L."/>
            <person name="Du Z."/>
            <person name="Godsy E."/>
            <person name="Goodner B."/>
            <person name="Hellner-Burris K."/>
            <person name="Hernandez J.A."/>
            <person name="Houmiel K."/>
            <person name="Imperial J."/>
            <person name="Kennedy C."/>
            <person name="Larson T.J."/>
            <person name="Latreille P."/>
            <person name="Ligon L.S."/>
            <person name="Lu J."/>
            <person name="Maerk M."/>
            <person name="Miller N.M."/>
            <person name="Norton S."/>
            <person name="O'Carroll I.P."/>
            <person name="Paulsen I."/>
            <person name="Raulfs E.C."/>
            <person name="Roemer R."/>
            <person name="Rosser J."/>
            <person name="Segura D."/>
            <person name="Slater S."/>
            <person name="Stricklin S.L."/>
            <person name="Studholme D.J."/>
            <person name="Sun J."/>
            <person name="Viana C.J."/>
            <person name="Wallin E."/>
            <person name="Wang B."/>
            <person name="Wheeler C."/>
            <person name="Zhu H."/>
            <person name="Dean D.R."/>
            <person name="Dixon R."/>
            <person name="Wood D."/>
        </authorList>
    </citation>
    <scope>NUCLEOTIDE SEQUENCE [LARGE SCALE GENOMIC DNA]</scope>
    <source>
        <strain>DJ / ATCC BAA-1303</strain>
    </source>
</reference>
<feature type="chain" id="PRO_1000213282" description="Phosphoribosyl-ATP pyrophosphatase">
    <location>
        <begin position="1"/>
        <end position="111"/>
    </location>
</feature>
<gene>
    <name evidence="1" type="primary">hisE</name>
    <name type="ordered locus">Avin_45450</name>
</gene>
<proteinExistence type="inferred from homology"/>
<organism>
    <name type="scientific">Azotobacter vinelandii (strain DJ / ATCC BAA-1303)</name>
    <dbReference type="NCBI Taxonomy" id="322710"/>
    <lineage>
        <taxon>Bacteria</taxon>
        <taxon>Pseudomonadati</taxon>
        <taxon>Pseudomonadota</taxon>
        <taxon>Gammaproteobacteria</taxon>
        <taxon>Pseudomonadales</taxon>
        <taxon>Pseudomonadaceae</taxon>
        <taxon>Azotobacter</taxon>
    </lineage>
</organism>
<keyword id="KW-0028">Amino-acid biosynthesis</keyword>
<keyword id="KW-0067">ATP-binding</keyword>
<keyword id="KW-0963">Cytoplasm</keyword>
<keyword id="KW-0368">Histidine biosynthesis</keyword>
<keyword id="KW-0378">Hydrolase</keyword>
<keyword id="KW-0547">Nucleotide-binding</keyword>
<dbReference type="EC" id="3.6.1.31" evidence="1"/>
<dbReference type="EMBL" id="CP001157">
    <property type="protein sequence ID" value="ACO80659.1"/>
    <property type="molecule type" value="Genomic_DNA"/>
</dbReference>
<dbReference type="RefSeq" id="WP_012703026.1">
    <property type="nucleotide sequence ID" value="NC_012560.1"/>
</dbReference>
<dbReference type="SMR" id="C1DHS6"/>
<dbReference type="STRING" id="322710.Avin_45450"/>
<dbReference type="EnsemblBacteria" id="ACO80659">
    <property type="protein sequence ID" value="ACO80659"/>
    <property type="gene ID" value="Avin_45450"/>
</dbReference>
<dbReference type="GeneID" id="88187429"/>
<dbReference type="KEGG" id="avn:Avin_45450"/>
<dbReference type="eggNOG" id="COG0140">
    <property type="taxonomic scope" value="Bacteria"/>
</dbReference>
<dbReference type="HOGENOM" id="CLU_123337_1_2_6"/>
<dbReference type="OrthoDB" id="9814738at2"/>
<dbReference type="UniPathway" id="UPA00031">
    <property type="reaction ID" value="UER00007"/>
</dbReference>
<dbReference type="Proteomes" id="UP000002424">
    <property type="component" value="Chromosome"/>
</dbReference>
<dbReference type="GO" id="GO:0005737">
    <property type="term" value="C:cytoplasm"/>
    <property type="evidence" value="ECO:0007669"/>
    <property type="project" value="UniProtKB-SubCell"/>
</dbReference>
<dbReference type="GO" id="GO:0005524">
    <property type="term" value="F:ATP binding"/>
    <property type="evidence" value="ECO:0007669"/>
    <property type="project" value="UniProtKB-KW"/>
</dbReference>
<dbReference type="GO" id="GO:0004636">
    <property type="term" value="F:phosphoribosyl-ATP diphosphatase activity"/>
    <property type="evidence" value="ECO:0007669"/>
    <property type="project" value="UniProtKB-UniRule"/>
</dbReference>
<dbReference type="GO" id="GO:0000105">
    <property type="term" value="P:L-histidine biosynthetic process"/>
    <property type="evidence" value="ECO:0007669"/>
    <property type="project" value="UniProtKB-UniRule"/>
</dbReference>
<dbReference type="CDD" id="cd11534">
    <property type="entry name" value="NTP-PPase_HisIE_like"/>
    <property type="match status" value="1"/>
</dbReference>
<dbReference type="Gene3D" id="1.10.287.1080">
    <property type="entry name" value="MazG-like"/>
    <property type="match status" value="1"/>
</dbReference>
<dbReference type="HAMAP" id="MF_01020">
    <property type="entry name" value="HisE"/>
    <property type="match status" value="1"/>
</dbReference>
<dbReference type="InterPro" id="IPR008179">
    <property type="entry name" value="HisE"/>
</dbReference>
<dbReference type="InterPro" id="IPR021130">
    <property type="entry name" value="PRib-ATP_PPHydrolase-like"/>
</dbReference>
<dbReference type="NCBIfam" id="TIGR03188">
    <property type="entry name" value="histidine_hisI"/>
    <property type="match status" value="1"/>
</dbReference>
<dbReference type="NCBIfam" id="NF001611">
    <property type="entry name" value="PRK00400.1-3"/>
    <property type="match status" value="1"/>
</dbReference>
<dbReference type="PANTHER" id="PTHR42945">
    <property type="entry name" value="HISTIDINE BIOSYNTHESIS BIFUNCTIONAL PROTEIN"/>
    <property type="match status" value="1"/>
</dbReference>
<dbReference type="PANTHER" id="PTHR42945:SF9">
    <property type="entry name" value="HISTIDINE BIOSYNTHESIS BIFUNCTIONAL PROTEIN HISIE"/>
    <property type="match status" value="1"/>
</dbReference>
<dbReference type="Pfam" id="PF01503">
    <property type="entry name" value="PRA-PH"/>
    <property type="match status" value="1"/>
</dbReference>
<dbReference type="SUPFAM" id="SSF101386">
    <property type="entry name" value="all-alpha NTP pyrophosphatases"/>
    <property type="match status" value="1"/>
</dbReference>